<protein>
    <recommendedName>
        <fullName>Endonuclease/exonuclease/phosphatase family domain-containing protein 1</fullName>
    </recommendedName>
</protein>
<proteinExistence type="evidence at protein level"/>
<comment type="interaction">
    <interactant intactId="EBI-12262046">
        <id>Q7L9B9</id>
    </interactant>
    <interactant intactId="EBI-12193965">
        <id>Q9Y3R0-3</id>
        <label>GRIP1</label>
    </interactant>
    <organismsDiffer>false</organismsDiffer>
    <experiments>3</experiments>
</comment>
<comment type="sequence caution" evidence="10">
    <conflict type="erroneous initiation">
        <sequence resource="EMBL-CDS" id="BAB21797"/>
    </conflict>
    <text>Extended N-terminus.</text>
</comment>
<gene>
    <name type="primary">EEPD1</name>
    <name type="synonym">KIAA1706</name>
</gene>
<evidence type="ECO:0000250" key="1">
    <source>
        <dbReference type="UniProtKB" id="Q3TGW2"/>
    </source>
</evidence>
<evidence type="ECO:0000250" key="2">
    <source>
        <dbReference type="UniProtKB" id="Q5XI74"/>
    </source>
</evidence>
<evidence type="ECO:0000256" key="3">
    <source>
        <dbReference type="SAM" id="MobiDB-lite"/>
    </source>
</evidence>
<evidence type="ECO:0000269" key="4">
    <source>
    </source>
</evidence>
<evidence type="ECO:0000269" key="5">
    <source>
    </source>
</evidence>
<evidence type="ECO:0000269" key="6">
    <source>
    </source>
</evidence>
<evidence type="ECO:0000269" key="7">
    <source>
    </source>
</evidence>
<evidence type="ECO:0000269" key="8">
    <source>
    </source>
</evidence>
<evidence type="ECO:0000269" key="9">
    <source ref="4"/>
</evidence>
<evidence type="ECO:0000305" key="10"/>
<evidence type="ECO:0007744" key="11">
    <source>
    </source>
</evidence>
<evidence type="ECO:0007744" key="12">
    <source>
    </source>
</evidence>
<reference key="1">
    <citation type="journal article" date="2000" name="DNA Res.">
        <title>Prediction of the coding sequences of unidentified human genes. XIX. The complete sequences of 100 new cDNA clones from brain which code for large proteins in vitro.</title>
        <authorList>
            <person name="Nagase T."/>
            <person name="Kikuno R."/>
            <person name="Hattori A."/>
            <person name="Kondo Y."/>
            <person name="Okumura K."/>
            <person name="Ohara O."/>
        </authorList>
    </citation>
    <scope>NUCLEOTIDE SEQUENCE [LARGE SCALE MRNA]</scope>
    <scope>VARIANT ASN-343</scope>
    <source>
        <tissue>Brain</tissue>
    </source>
</reference>
<reference key="2">
    <citation type="journal article" date="2004" name="Nat. Genet.">
        <title>Complete sequencing and characterization of 21,243 full-length human cDNAs.</title>
        <authorList>
            <person name="Ota T."/>
            <person name="Suzuki Y."/>
            <person name="Nishikawa T."/>
            <person name="Otsuki T."/>
            <person name="Sugiyama T."/>
            <person name="Irie R."/>
            <person name="Wakamatsu A."/>
            <person name="Hayashi K."/>
            <person name="Sato H."/>
            <person name="Nagai K."/>
            <person name="Kimura K."/>
            <person name="Makita H."/>
            <person name="Sekine M."/>
            <person name="Obayashi M."/>
            <person name="Nishi T."/>
            <person name="Shibahara T."/>
            <person name="Tanaka T."/>
            <person name="Ishii S."/>
            <person name="Yamamoto J."/>
            <person name="Saito K."/>
            <person name="Kawai Y."/>
            <person name="Isono Y."/>
            <person name="Nakamura Y."/>
            <person name="Nagahari K."/>
            <person name="Murakami K."/>
            <person name="Yasuda T."/>
            <person name="Iwayanagi T."/>
            <person name="Wagatsuma M."/>
            <person name="Shiratori A."/>
            <person name="Sudo H."/>
            <person name="Hosoiri T."/>
            <person name="Kaku Y."/>
            <person name="Kodaira H."/>
            <person name="Kondo H."/>
            <person name="Sugawara M."/>
            <person name="Takahashi M."/>
            <person name="Kanda K."/>
            <person name="Yokoi T."/>
            <person name="Furuya T."/>
            <person name="Kikkawa E."/>
            <person name="Omura Y."/>
            <person name="Abe K."/>
            <person name="Kamihara K."/>
            <person name="Katsuta N."/>
            <person name="Sato K."/>
            <person name="Tanikawa M."/>
            <person name="Yamazaki M."/>
            <person name="Ninomiya K."/>
            <person name="Ishibashi T."/>
            <person name="Yamashita H."/>
            <person name="Murakawa K."/>
            <person name="Fujimori K."/>
            <person name="Tanai H."/>
            <person name="Kimata M."/>
            <person name="Watanabe M."/>
            <person name="Hiraoka S."/>
            <person name="Chiba Y."/>
            <person name="Ishida S."/>
            <person name="Ono Y."/>
            <person name="Takiguchi S."/>
            <person name="Watanabe S."/>
            <person name="Yosida M."/>
            <person name="Hotuta T."/>
            <person name="Kusano J."/>
            <person name="Kanehori K."/>
            <person name="Takahashi-Fujii A."/>
            <person name="Hara H."/>
            <person name="Tanase T.-O."/>
            <person name="Nomura Y."/>
            <person name="Togiya S."/>
            <person name="Komai F."/>
            <person name="Hara R."/>
            <person name="Takeuchi K."/>
            <person name="Arita M."/>
            <person name="Imose N."/>
            <person name="Musashino K."/>
            <person name="Yuuki H."/>
            <person name="Oshima A."/>
            <person name="Sasaki N."/>
            <person name="Aotsuka S."/>
            <person name="Yoshikawa Y."/>
            <person name="Matsunawa H."/>
            <person name="Ichihara T."/>
            <person name="Shiohata N."/>
            <person name="Sano S."/>
            <person name="Moriya S."/>
            <person name="Momiyama H."/>
            <person name="Satoh N."/>
            <person name="Takami S."/>
            <person name="Terashima Y."/>
            <person name="Suzuki O."/>
            <person name="Nakagawa S."/>
            <person name="Senoh A."/>
            <person name="Mizoguchi H."/>
            <person name="Goto Y."/>
            <person name="Shimizu F."/>
            <person name="Wakebe H."/>
            <person name="Hishigaki H."/>
            <person name="Watanabe T."/>
            <person name="Sugiyama A."/>
            <person name="Takemoto M."/>
            <person name="Kawakami B."/>
            <person name="Yamazaki M."/>
            <person name="Watanabe K."/>
            <person name="Kumagai A."/>
            <person name="Itakura S."/>
            <person name="Fukuzumi Y."/>
            <person name="Fujimori Y."/>
            <person name="Komiyama M."/>
            <person name="Tashiro H."/>
            <person name="Tanigami A."/>
            <person name="Fujiwara T."/>
            <person name="Ono T."/>
            <person name="Yamada K."/>
            <person name="Fujii Y."/>
            <person name="Ozaki K."/>
            <person name="Hirao M."/>
            <person name="Ohmori Y."/>
            <person name="Kawabata A."/>
            <person name="Hikiji T."/>
            <person name="Kobatake N."/>
            <person name="Inagaki H."/>
            <person name="Ikema Y."/>
            <person name="Okamoto S."/>
            <person name="Okitani R."/>
            <person name="Kawakami T."/>
            <person name="Noguchi S."/>
            <person name="Itoh T."/>
            <person name="Shigeta K."/>
            <person name="Senba T."/>
            <person name="Matsumura K."/>
            <person name="Nakajima Y."/>
            <person name="Mizuno T."/>
            <person name="Morinaga M."/>
            <person name="Sasaki M."/>
            <person name="Togashi T."/>
            <person name="Oyama M."/>
            <person name="Hata H."/>
            <person name="Watanabe M."/>
            <person name="Komatsu T."/>
            <person name="Mizushima-Sugano J."/>
            <person name="Satoh T."/>
            <person name="Shirai Y."/>
            <person name="Takahashi Y."/>
            <person name="Nakagawa K."/>
            <person name="Okumura K."/>
            <person name="Nagase T."/>
            <person name="Nomura N."/>
            <person name="Kikuchi H."/>
            <person name="Masuho Y."/>
            <person name="Yamashita R."/>
            <person name="Nakai K."/>
            <person name="Yada T."/>
            <person name="Nakamura Y."/>
            <person name="Ohara O."/>
            <person name="Isogai T."/>
            <person name="Sugano S."/>
        </authorList>
    </citation>
    <scope>NUCLEOTIDE SEQUENCE [LARGE SCALE MRNA]</scope>
    <scope>VARIANT ASN-343</scope>
    <source>
        <tissue>Mammary gland</tissue>
    </source>
</reference>
<reference key="3">
    <citation type="journal article" date="2003" name="Science">
        <title>Human chromosome 7: DNA sequence and biology.</title>
        <authorList>
            <person name="Scherer S.W."/>
            <person name="Cheung J."/>
            <person name="MacDonald J.R."/>
            <person name="Osborne L.R."/>
            <person name="Nakabayashi K."/>
            <person name="Herbrick J.-A."/>
            <person name="Carson A.R."/>
            <person name="Parker-Katiraee L."/>
            <person name="Skaug J."/>
            <person name="Khaja R."/>
            <person name="Zhang J."/>
            <person name="Hudek A.K."/>
            <person name="Li M."/>
            <person name="Haddad M."/>
            <person name="Duggan G.E."/>
            <person name="Fernandez B.A."/>
            <person name="Kanematsu E."/>
            <person name="Gentles S."/>
            <person name="Christopoulos C.C."/>
            <person name="Choufani S."/>
            <person name="Kwasnicka D."/>
            <person name="Zheng X.H."/>
            <person name="Lai Z."/>
            <person name="Nusskern D.R."/>
            <person name="Zhang Q."/>
            <person name="Gu Z."/>
            <person name="Lu F."/>
            <person name="Zeesman S."/>
            <person name="Nowaczyk M.J."/>
            <person name="Teshima I."/>
            <person name="Chitayat D."/>
            <person name="Shuman C."/>
            <person name="Weksberg R."/>
            <person name="Zackai E.H."/>
            <person name="Grebe T.A."/>
            <person name="Cox S.R."/>
            <person name="Kirkpatrick S.J."/>
            <person name="Rahman N."/>
            <person name="Friedman J.M."/>
            <person name="Heng H.H.Q."/>
            <person name="Pelicci P.G."/>
            <person name="Lo-Coco F."/>
            <person name="Belloni E."/>
            <person name="Shaffer L.G."/>
            <person name="Pober B."/>
            <person name="Morton C.C."/>
            <person name="Gusella J.F."/>
            <person name="Bruns G.A.P."/>
            <person name="Korf B.R."/>
            <person name="Quade B.J."/>
            <person name="Ligon A.H."/>
            <person name="Ferguson H."/>
            <person name="Higgins A.W."/>
            <person name="Leach N.T."/>
            <person name="Herrick S.R."/>
            <person name="Lemyre E."/>
            <person name="Farra C.G."/>
            <person name="Kim H.-G."/>
            <person name="Summers A.M."/>
            <person name="Gripp K.W."/>
            <person name="Roberts W."/>
            <person name="Szatmari P."/>
            <person name="Winsor E.J.T."/>
            <person name="Grzeschik K.-H."/>
            <person name="Teebi A."/>
            <person name="Minassian B.A."/>
            <person name="Kere J."/>
            <person name="Armengol L."/>
            <person name="Pujana M.A."/>
            <person name="Estivill X."/>
            <person name="Wilson M.D."/>
            <person name="Koop B.F."/>
            <person name="Tosi S."/>
            <person name="Moore G.E."/>
            <person name="Boright A.P."/>
            <person name="Zlotorynski E."/>
            <person name="Kerem B."/>
            <person name="Kroisel P.M."/>
            <person name="Petek E."/>
            <person name="Oscier D.G."/>
            <person name="Mould S.J."/>
            <person name="Doehner H."/>
            <person name="Doehner K."/>
            <person name="Rommens J.M."/>
            <person name="Vincent J.B."/>
            <person name="Venter J.C."/>
            <person name="Li P.W."/>
            <person name="Mural R.J."/>
            <person name="Adams M.D."/>
            <person name="Tsui L.-C."/>
        </authorList>
    </citation>
    <scope>NUCLEOTIDE SEQUENCE [LARGE SCALE GENOMIC DNA]</scope>
    <scope>VARIANT ASN-343</scope>
</reference>
<reference key="4">
    <citation type="submission" date="2005-07" db="EMBL/GenBank/DDBJ databases">
        <authorList>
            <person name="Mural R.J."/>
            <person name="Istrail S."/>
            <person name="Sutton G.G."/>
            <person name="Florea L."/>
            <person name="Halpern A.L."/>
            <person name="Mobarry C.M."/>
            <person name="Lippert R."/>
            <person name="Walenz B."/>
            <person name="Shatkay H."/>
            <person name="Dew I."/>
            <person name="Miller J.R."/>
            <person name="Flanigan M.J."/>
            <person name="Edwards N.J."/>
            <person name="Bolanos R."/>
            <person name="Fasulo D."/>
            <person name="Halldorsson B.V."/>
            <person name="Hannenhalli S."/>
            <person name="Turner R."/>
            <person name="Yooseph S."/>
            <person name="Lu F."/>
            <person name="Nusskern D.R."/>
            <person name="Shue B.C."/>
            <person name="Zheng X.H."/>
            <person name="Zhong F."/>
            <person name="Delcher A.L."/>
            <person name="Huson D.H."/>
            <person name="Kravitz S.A."/>
            <person name="Mouchard L."/>
            <person name="Reinert K."/>
            <person name="Remington K.A."/>
            <person name="Clark A.G."/>
            <person name="Waterman M.S."/>
            <person name="Eichler E.E."/>
            <person name="Adams M.D."/>
            <person name="Hunkapiller M.W."/>
            <person name="Myers E.W."/>
            <person name="Venter J.C."/>
        </authorList>
    </citation>
    <scope>NUCLEOTIDE SEQUENCE [LARGE SCALE GENOMIC DNA]</scope>
    <scope>VARIANT ASN-343</scope>
</reference>
<reference key="5">
    <citation type="journal article" date="2004" name="Genome Res.">
        <title>The status, quality, and expansion of the NIH full-length cDNA project: the Mammalian Gene Collection (MGC).</title>
        <authorList>
            <consortium name="The MGC Project Team"/>
        </authorList>
    </citation>
    <scope>NUCLEOTIDE SEQUENCE [LARGE SCALE MRNA]</scope>
    <scope>VARIANT ASN-343</scope>
    <source>
        <tissue>Blood</tissue>
    </source>
</reference>
<reference key="6">
    <citation type="journal article" date="2010" name="Proteomics">
        <title>Strategy for comprehensive identification of human N-myristoylated proteins using an insect cell-free protein synthesis system.</title>
        <authorList>
            <person name="Suzuki T."/>
            <person name="Moriya K."/>
            <person name="Nagatoshi K."/>
            <person name="Ota Y."/>
            <person name="Ezure T."/>
            <person name="Ando E."/>
            <person name="Tsunasawa S."/>
            <person name="Utsumi T."/>
        </authorList>
    </citation>
    <scope>MYRISTOYLATION AT GLY-2</scope>
</reference>
<reference key="7">
    <citation type="journal article" date="2013" name="J. Proteome Res.">
        <title>Toward a comprehensive characterization of a human cancer cell phosphoproteome.</title>
        <authorList>
            <person name="Zhou H."/>
            <person name="Di Palma S."/>
            <person name="Preisinger C."/>
            <person name="Peng M."/>
            <person name="Polat A.N."/>
            <person name="Heck A.J."/>
            <person name="Mohammed S."/>
        </authorList>
    </citation>
    <scope>PHOSPHORYLATION [LARGE SCALE ANALYSIS] AT SER-25; SER-160; SER-173 AND SER-428</scope>
    <scope>IDENTIFICATION BY MASS SPECTROMETRY [LARGE SCALE ANALYSIS]</scope>
    <source>
        <tissue>Erythroleukemia</tissue>
    </source>
</reference>
<reference key="8">
    <citation type="journal article" date="2014" name="J. Proteomics">
        <title>An enzyme assisted RP-RPLC approach for in-depth analysis of human liver phosphoproteome.</title>
        <authorList>
            <person name="Bian Y."/>
            <person name="Song C."/>
            <person name="Cheng K."/>
            <person name="Dong M."/>
            <person name="Wang F."/>
            <person name="Huang J."/>
            <person name="Sun D."/>
            <person name="Wang L."/>
            <person name="Ye M."/>
            <person name="Zou H."/>
        </authorList>
    </citation>
    <scope>PHOSPHORYLATION [LARGE SCALE ANALYSIS] AT SER-16; SER-110; SER-160 AND SER-173</scope>
    <scope>IDENTIFICATION BY MASS SPECTROMETRY [LARGE SCALE ANALYSIS]</scope>
    <source>
        <tissue>Liver</tissue>
    </source>
</reference>
<keyword id="KW-0449">Lipoprotein</keyword>
<keyword id="KW-0519">Myristate</keyword>
<keyword id="KW-0597">Phosphoprotein</keyword>
<keyword id="KW-1267">Proteomics identification</keyword>
<keyword id="KW-1185">Reference proteome</keyword>
<organism>
    <name type="scientific">Homo sapiens</name>
    <name type="common">Human</name>
    <dbReference type="NCBI Taxonomy" id="9606"/>
    <lineage>
        <taxon>Eukaryota</taxon>
        <taxon>Metazoa</taxon>
        <taxon>Chordata</taxon>
        <taxon>Craniata</taxon>
        <taxon>Vertebrata</taxon>
        <taxon>Euteleostomi</taxon>
        <taxon>Mammalia</taxon>
        <taxon>Eutheria</taxon>
        <taxon>Euarchontoglires</taxon>
        <taxon>Primates</taxon>
        <taxon>Haplorrhini</taxon>
        <taxon>Catarrhini</taxon>
        <taxon>Hominidae</taxon>
        <taxon>Homo</taxon>
    </lineage>
</organism>
<name>EEPD1_HUMAN</name>
<accession>Q7L9B9</accession>
<accession>Q96K64</accession>
<accession>Q9C0F7</accession>
<sequence length="569" mass="62403">MGSTLGCHRSIPRDPSDLSHSRKFSAACNFSNILVNQERLNINTATEEELMTLPGVTRAVARSIVEYREYIGGFKKVEDLALVSGVGATKLEQVKFEICVSSKGSSAQHSPSSLRRDLLAEQQPHHLATAVPLTPRVNINTATPAQLMSVRGLSEKMALSIVDFRREHGPFRSVEDLVRMDGINAAFLDRIRHQVFAERSRPPSTHTNGGLTFTAKPHPSPTSLSLQSEDLDLPPGGPTQIISTRPSVEAFGGTRDGRPVLRLATWNLQGCSVEKANNPGVREVVCMTLLENSIKLLAVQELLDREALEKFCTELNQPTLPNIRKWKGPRGCWKAVVAEKPSSQLQKGAGYAGFLWDAAAGMELRDAGSQESSPSNGHGKLAGPSPYLGRFKVGSHDLTLVNLHLAALTLLGSENPSKNHSDGHRLASFAQTLQETLKGEKDVIILGDFGQGPDSNDYDILRKEKFHHLIPAHTFTNISTKNPQGSKSLDNIWISKSLKKVFTGHWAVVREGLTNPWIPDNWSWGGVASEHCPVLAEFYTEKDWSKKDAPRNGSGVALERSEANIKHER</sequence>
<dbReference type="EMBL" id="AB051493">
    <property type="protein sequence ID" value="BAB21797.1"/>
    <property type="status" value="ALT_INIT"/>
    <property type="molecule type" value="mRNA"/>
</dbReference>
<dbReference type="EMBL" id="AK027386">
    <property type="protein sequence ID" value="BAB55076.1"/>
    <property type="molecule type" value="mRNA"/>
</dbReference>
<dbReference type="EMBL" id="AC007327">
    <property type="status" value="NOT_ANNOTATED_CDS"/>
    <property type="molecule type" value="Genomic_DNA"/>
</dbReference>
<dbReference type="EMBL" id="AC078841">
    <property type="status" value="NOT_ANNOTATED_CDS"/>
    <property type="molecule type" value="Genomic_DNA"/>
</dbReference>
<dbReference type="EMBL" id="CH236951">
    <property type="protein sequence ID" value="EAL23976.1"/>
    <property type="molecule type" value="Genomic_DNA"/>
</dbReference>
<dbReference type="EMBL" id="CH471073">
    <property type="protein sequence ID" value="EAW94063.1"/>
    <property type="molecule type" value="Genomic_DNA"/>
</dbReference>
<dbReference type="EMBL" id="BC065518">
    <property type="protein sequence ID" value="AAH65518.1"/>
    <property type="molecule type" value="mRNA"/>
</dbReference>
<dbReference type="CCDS" id="CCDS34619.1"/>
<dbReference type="RefSeq" id="NP_085139.2">
    <property type="nucleotide sequence ID" value="NM_030636.3"/>
</dbReference>
<dbReference type="BioGRID" id="123317">
    <property type="interactions" value="36"/>
</dbReference>
<dbReference type="ELM" id="Q7L9B9"/>
<dbReference type="FunCoup" id="Q7L9B9">
    <property type="interactions" value="833"/>
</dbReference>
<dbReference type="IntAct" id="Q7L9B9">
    <property type="interactions" value="22"/>
</dbReference>
<dbReference type="STRING" id="9606.ENSP00000242108"/>
<dbReference type="iPTMnet" id="Q7L9B9"/>
<dbReference type="PhosphoSitePlus" id="Q7L9B9"/>
<dbReference type="SwissPalm" id="Q7L9B9"/>
<dbReference type="BioMuta" id="EEPD1"/>
<dbReference type="DMDM" id="296434489"/>
<dbReference type="jPOST" id="Q7L9B9"/>
<dbReference type="MassIVE" id="Q7L9B9"/>
<dbReference type="PaxDb" id="9606-ENSP00000242108"/>
<dbReference type="PeptideAtlas" id="Q7L9B9"/>
<dbReference type="ProteomicsDB" id="68844"/>
<dbReference type="Pumba" id="Q7L9B9"/>
<dbReference type="Antibodypedia" id="26526">
    <property type="antibodies" value="94 antibodies from 19 providers"/>
</dbReference>
<dbReference type="DNASU" id="80820"/>
<dbReference type="Ensembl" id="ENST00000242108.9">
    <property type="protein sequence ID" value="ENSP00000242108.4"/>
    <property type="gene ID" value="ENSG00000122547.12"/>
</dbReference>
<dbReference type="GeneID" id="80820"/>
<dbReference type="KEGG" id="hsa:80820"/>
<dbReference type="MANE-Select" id="ENST00000242108.9">
    <property type="protein sequence ID" value="ENSP00000242108.4"/>
    <property type="RefSeq nucleotide sequence ID" value="NM_030636.3"/>
    <property type="RefSeq protein sequence ID" value="NP_085139.2"/>
</dbReference>
<dbReference type="UCSC" id="uc003tfa.4">
    <property type="organism name" value="human"/>
</dbReference>
<dbReference type="AGR" id="HGNC:22223"/>
<dbReference type="CTD" id="80820"/>
<dbReference type="DisGeNET" id="80820"/>
<dbReference type="GeneCards" id="EEPD1"/>
<dbReference type="HGNC" id="HGNC:22223">
    <property type="gene designation" value="EEPD1"/>
</dbReference>
<dbReference type="HPA" id="ENSG00000122547">
    <property type="expression patterns" value="Tissue enhanced (skeletal)"/>
</dbReference>
<dbReference type="neXtProt" id="NX_Q7L9B9"/>
<dbReference type="OpenTargets" id="ENSG00000122547"/>
<dbReference type="PharmGKB" id="PA162384303"/>
<dbReference type="VEuPathDB" id="HostDB:ENSG00000122547"/>
<dbReference type="eggNOG" id="KOG1857">
    <property type="taxonomic scope" value="Eukaryota"/>
</dbReference>
<dbReference type="GeneTree" id="ENSGT00390000009677"/>
<dbReference type="HOGENOM" id="CLU_033721_1_0_1"/>
<dbReference type="InParanoid" id="Q7L9B9"/>
<dbReference type="OMA" id="HLVPANT"/>
<dbReference type="OrthoDB" id="6237065at2759"/>
<dbReference type="PAN-GO" id="Q7L9B9">
    <property type="GO annotations" value="1 GO annotation based on evolutionary models"/>
</dbReference>
<dbReference type="PhylomeDB" id="Q7L9B9"/>
<dbReference type="TreeFam" id="TF328735"/>
<dbReference type="PathwayCommons" id="Q7L9B9"/>
<dbReference type="Reactome" id="R-HSA-9029569">
    <property type="pathway name" value="NR1H3 &amp; NR1H2 regulate gene expression linked to cholesterol transport and efflux"/>
</dbReference>
<dbReference type="SignaLink" id="Q7L9B9"/>
<dbReference type="BioGRID-ORCS" id="80820">
    <property type="hits" value="12 hits in 1151 CRISPR screens"/>
</dbReference>
<dbReference type="ChiTaRS" id="EEPD1">
    <property type="organism name" value="human"/>
</dbReference>
<dbReference type="GenomeRNAi" id="80820"/>
<dbReference type="Pharos" id="Q7L9B9">
    <property type="development level" value="Tbio"/>
</dbReference>
<dbReference type="PRO" id="PR:Q7L9B9"/>
<dbReference type="Proteomes" id="UP000005640">
    <property type="component" value="Chromosome 7"/>
</dbReference>
<dbReference type="RNAct" id="Q7L9B9">
    <property type="molecule type" value="protein"/>
</dbReference>
<dbReference type="Bgee" id="ENSG00000122547">
    <property type="expression patterns" value="Expressed in ventricular zone and 144 other cell types or tissues"/>
</dbReference>
<dbReference type="ExpressionAtlas" id="Q7L9B9">
    <property type="expression patterns" value="baseline and differential"/>
</dbReference>
<dbReference type="GO" id="GO:0005886">
    <property type="term" value="C:plasma membrane"/>
    <property type="evidence" value="ECO:0000315"/>
    <property type="project" value="BHF-UCL"/>
</dbReference>
<dbReference type="GO" id="GO:0003824">
    <property type="term" value="F:catalytic activity"/>
    <property type="evidence" value="ECO:0007669"/>
    <property type="project" value="InterPro"/>
</dbReference>
<dbReference type="GO" id="GO:0003677">
    <property type="term" value="F:DNA binding"/>
    <property type="evidence" value="ECO:0007669"/>
    <property type="project" value="InterPro"/>
</dbReference>
<dbReference type="GO" id="GO:0006281">
    <property type="term" value="P:DNA repair"/>
    <property type="evidence" value="ECO:0007669"/>
    <property type="project" value="InterPro"/>
</dbReference>
<dbReference type="GO" id="GO:0010875">
    <property type="term" value="P:positive regulation of cholesterol efflux"/>
    <property type="evidence" value="ECO:0000315"/>
    <property type="project" value="BHF-UCL"/>
</dbReference>
<dbReference type="CDD" id="cd10283">
    <property type="entry name" value="MnuA_DNase1-like"/>
    <property type="match status" value="1"/>
</dbReference>
<dbReference type="Gene3D" id="1.10.150.280">
    <property type="entry name" value="AF1531-like domain"/>
    <property type="match status" value="1"/>
</dbReference>
<dbReference type="Gene3D" id="3.60.10.10">
    <property type="entry name" value="Endonuclease/exonuclease/phosphatase"/>
    <property type="match status" value="1"/>
</dbReference>
<dbReference type="Gene3D" id="1.10.150.320">
    <property type="entry name" value="Photosystem II 12 kDa extrinsic protein"/>
    <property type="match status" value="1"/>
</dbReference>
<dbReference type="InterPro" id="IPR004509">
    <property type="entry name" value="Competence_ComEA_HhH"/>
</dbReference>
<dbReference type="InterPro" id="IPR051675">
    <property type="entry name" value="Endo/Exo/Phosphatase_dom_1"/>
</dbReference>
<dbReference type="InterPro" id="IPR036691">
    <property type="entry name" value="Endo/exonu/phosph_ase_sf"/>
</dbReference>
<dbReference type="InterPro" id="IPR005135">
    <property type="entry name" value="Endo/exonuclease/phosphatase"/>
</dbReference>
<dbReference type="InterPro" id="IPR003583">
    <property type="entry name" value="Hlx-hairpin-Hlx_DNA-bd_motif"/>
</dbReference>
<dbReference type="InterPro" id="IPR010994">
    <property type="entry name" value="RuvA_2-like"/>
</dbReference>
<dbReference type="NCBIfam" id="TIGR00426">
    <property type="entry name" value="competence protein ComEA helix-hairpin-helix repeat region"/>
    <property type="match status" value="1"/>
</dbReference>
<dbReference type="PANTHER" id="PTHR21180">
    <property type="entry name" value="ENDONUCLEASE/EXONUCLEASE/PHOSPHATASE FAMILY DOMAIN-CONTAINING PROTEIN 1"/>
    <property type="match status" value="1"/>
</dbReference>
<dbReference type="PANTHER" id="PTHR21180:SF32">
    <property type="entry name" value="ENDONUCLEASE_EXONUCLEASE_PHOSPHATASE FAMILY DOMAIN-CONTAINING PROTEIN 1"/>
    <property type="match status" value="1"/>
</dbReference>
<dbReference type="Pfam" id="PF03372">
    <property type="entry name" value="Exo_endo_phos"/>
    <property type="match status" value="1"/>
</dbReference>
<dbReference type="Pfam" id="PF12836">
    <property type="entry name" value="HHH_3"/>
    <property type="match status" value="2"/>
</dbReference>
<dbReference type="SMART" id="SM00278">
    <property type="entry name" value="HhH1"/>
    <property type="match status" value="3"/>
</dbReference>
<dbReference type="SUPFAM" id="SSF56219">
    <property type="entry name" value="DNase I-like"/>
    <property type="match status" value="1"/>
</dbReference>
<dbReference type="SUPFAM" id="SSF47781">
    <property type="entry name" value="RuvA domain 2-like"/>
    <property type="match status" value="2"/>
</dbReference>
<feature type="initiator methionine" description="Removed">
    <location>
        <position position="1"/>
    </location>
</feature>
<feature type="chain" id="PRO_0000317261" description="Endonuclease/exonuclease/phosphatase family domain-containing protein 1">
    <location>
        <begin position="2"/>
        <end position="569"/>
    </location>
</feature>
<feature type="domain" description="HhH">
    <location>
        <begin position="38"/>
        <end position="67"/>
    </location>
</feature>
<feature type="region of interest" description="Disordered" evidence="3">
    <location>
        <begin position="1"/>
        <end position="20"/>
    </location>
</feature>
<feature type="region of interest" description="Disordered" evidence="3">
    <location>
        <begin position="200"/>
        <end position="225"/>
    </location>
</feature>
<feature type="region of interest" description="Disordered" evidence="3">
    <location>
        <begin position="545"/>
        <end position="569"/>
    </location>
</feature>
<feature type="compositionally biased region" description="Basic and acidic residues" evidence="3">
    <location>
        <begin position="11"/>
        <end position="20"/>
    </location>
</feature>
<feature type="compositionally biased region" description="Polar residues" evidence="3">
    <location>
        <begin position="202"/>
        <end position="211"/>
    </location>
</feature>
<feature type="compositionally biased region" description="Basic and acidic residues" evidence="3">
    <location>
        <begin position="559"/>
        <end position="569"/>
    </location>
</feature>
<feature type="modified residue" description="Phosphoserine" evidence="12">
    <location>
        <position position="16"/>
    </location>
</feature>
<feature type="modified residue" description="Phosphoserine" evidence="2">
    <location>
        <position position="21"/>
    </location>
</feature>
<feature type="modified residue" description="Phosphoserine" evidence="11">
    <location>
        <position position="25"/>
    </location>
</feature>
<feature type="modified residue" description="Phosphoserine" evidence="1">
    <location>
        <position position="106"/>
    </location>
</feature>
<feature type="modified residue" description="Phosphoserine" evidence="12">
    <location>
        <position position="110"/>
    </location>
</feature>
<feature type="modified residue" description="Phosphoserine" evidence="11 12">
    <location>
        <position position="160"/>
    </location>
</feature>
<feature type="modified residue" description="Phosphoserine" evidence="11 12">
    <location>
        <position position="173"/>
    </location>
</feature>
<feature type="modified residue" description="Phosphothreonine" evidence="1">
    <location>
        <position position="265"/>
    </location>
</feature>
<feature type="modified residue" description="Phosphoserine" evidence="11">
    <location>
        <position position="428"/>
    </location>
</feature>
<feature type="lipid moiety-binding region" description="N-myristoyl glycine" evidence="8">
    <location>
        <position position="2"/>
    </location>
</feature>
<feature type="sequence variant" id="VAR_060374" description="In dbSNP:rs196586." evidence="4 5 6 7 9">
    <original>S</original>
    <variation>N</variation>
    <location>
        <position position="343"/>
    </location>
</feature>
<feature type="sequence variant" id="VAR_056867" description="In dbSNP:rs3815682.">
    <original>A</original>
    <variation>S</variation>
    <location>
        <position position="358"/>
    </location>
</feature>
<feature type="sequence variant" id="VAR_056868" description="In dbSNP:rs196594.">
    <original>P</original>
    <variation>S</variation>
    <location>
        <position position="416"/>
    </location>
</feature>